<organism>
    <name type="scientific">Mycoplasmopsis pulmonis (strain UAB CTIP)</name>
    <name type="common">Mycoplasma pulmonis</name>
    <dbReference type="NCBI Taxonomy" id="272635"/>
    <lineage>
        <taxon>Bacteria</taxon>
        <taxon>Bacillati</taxon>
        <taxon>Mycoplasmatota</taxon>
        <taxon>Mycoplasmoidales</taxon>
        <taxon>Metamycoplasmataceae</taxon>
        <taxon>Mycoplasmopsis</taxon>
    </lineage>
</organism>
<feature type="chain" id="PRO_0000172638" description="Phosphatidylglycerol--prolipoprotein diacylglyceryl transferase">
    <location>
        <begin position="1"/>
        <end position="322"/>
    </location>
</feature>
<feature type="transmembrane region" description="Helical" evidence="1">
    <location>
        <begin position="23"/>
        <end position="43"/>
    </location>
</feature>
<feature type="transmembrane region" description="Helical" evidence="1">
    <location>
        <begin position="53"/>
        <end position="73"/>
    </location>
</feature>
<feature type="transmembrane region" description="Helical" evidence="1">
    <location>
        <begin position="97"/>
        <end position="117"/>
    </location>
</feature>
<feature type="transmembrane region" description="Helical" evidence="1">
    <location>
        <begin position="191"/>
        <end position="211"/>
    </location>
</feature>
<feature type="transmembrane region" description="Helical" evidence="1">
    <location>
        <begin position="250"/>
        <end position="270"/>
    </location>
</feature>
<feature type="binding site" evidence="1">
    <location>
        <position position="143"/>
    </location>
    <ligand>
        <name>a 1,2-diacyl-sn-glycero-3-phospho-(1'-sn-glycerol)</name>
        <dbReference type="ChEBI" id="CHEBI:64716"/>
    </ligand>
</feature>
<protein>
    <recommendedName>
        <fullName evidence="1">Phosphatidylglycerol--prolipoprotein diacylglyceryl transferase</fullName>
        <ecNumber evidence="1">2.5.1.145</ecNumber>
    </recommendedName>
</protein>
<proteinExistence type="inferred from homology"/>
<evidence type="ECO:0000255" key="1">
    <source>
        <dbReference type="HAMAP-Rule" id="MF_01147"/>
    </source>
</evidence>
<gene>
    <name evidence="1" type="primary">lgt</name>
    <name type="ordered locus">MYPU_7120</name>
</gene>
<reference key="1">
    <citation type="journal article" date="2001" name="Nucleic Acids Res.">
        <title>The complete genome sequence of the murine respiratory pathogen Mycoplasma pulmonis.</title>
        <authorList>
            <person name="Chambaud I."/>
            <person name="Heilig R."/>
            <person name="Ferris S."/>
            <person name="Barbe V."/>
            <person name="Samson D."/>
            <person name="Galisson F."/>
            <person name="Moszer I."/>
            <person name="Dybvig K."/>
            <person name="Wroblewski H."/>
            <person name="Viari A."/>
            <person name="Rocha E.P.C."/>
            <person name="Blanchard A."/>
        </authorList>
    </citation>
    <scope>NUCLEOTIDE SEQUENCE [LARGE SCALE GENOMIC DNA]</scope>
    <source>
        <strain>UAB CTIP</strain>
    </source>
</reference>
<name>LGT_MYCPU</name>
<sequence>MTSNFFPYKEGTATFLIDPYVRVYPIAILMGMIISILTVAFFWRKEKFNFDHFFALLFIIIPSSIIGARLWFVFERLIYNPQNPFPGSAWYAIWEGGLSIQGGVALPAILSLVYIYFKRDYIDYRKALSMILPTVLIGQAIGRWGNFANHEVYGKIDPTGQSSLIFGEWLARHMFIYNANESAASAAFRYPLFLYESISSIIGYIIIVWIIQERNLLKPGSNGGLYFVYYGTVRLAMEPLREESYFYYSLAAMFSILIGGMMMIYFEIWANPSRYVKTKIGKFRYQYDWTKVVVDKKDKKIKFQSNNNKNKTEGKIKKYVTK</sequence>
<dbReference type="EC" id="2.5.1.145" evidence="1"/>
<dbReference type="EMBL" id="AL445565">
    <property type="protein sequence ID" value="CAC13885.1"/>
    <property type="molecule type" value="Genomic_DNA"/>
</dbReference>
<dbReference type="PIR" id="H90600">
    <property type="entry name" value="H90600"/>
</dbReference>
<dbReference type="RefSeq" id="WP_010925513.1">
    <property type="nucleotide sequence ID" value="NC_002771.1"/>
</dbReference>
<dbReference type="SMR" id="Q98PL0"/>
<dbReference type="STRING" id="272635.gene:17577323"/>
<dbReference type="KEGG" id="mpu:MYPU_7120"/>
<dbReference type="eggNOG" id="COG0682">
    <property type="taxonomic scope" value="Bacteria"/>
</dbReference>
<dbReference type="HOGENOM" id="CLU_013386_0_2_14"/>
<dbReference type="BioCyc" id="MPUL272635:G1GT6-725-MONOMER"/>
<dbReference type="UniPathway" id="UPA00664"/>
<dbReference type="Proteomes" id="UP000000528">
    <property type="component" value="Chromosome"/>
</dbReference>
<dbReference type="GO" id="GO:0005886">
    <property type="term" value="C:plasma membrane"/>
    <property type="evidence" value="ECO:0007669"/>
    <property type="project" value="UniProtKB-SubCell"/>
</dbReference>
<dbReference type="GO" id="GO:0008961">
    <property type="term" value="F:phosphatidylglycerol-prolipoprotein diacylglyceryl transferase activity"/>
    <property type="evidence" value="ECO:0007669"/>
    <property type="project" value="UniProtKB-UniRule"/>
</dbReference>
<dbReference type="GO" id="GO:0042158">
    <property type="term" value="P:lipoprotein biosynthetic process"/>
    <property type="evidence" value="ECO:0007669"/>
    <property type="project" value="UniProtKB-UniRule"/>
</dbReference>
<dbReference type="HAMAP" id="MF_01147">
    <property type="entry name" value="Lgt"/>
    <property type="match status" value="1"/>
</dbReference>
<dbReference type="InterPro" id="IPR001640">
    <property type="entry name" value="Lgt"/>
</dbReference>
<dbReference type="NCBIfam" id="TIGR00544">
    <property type="entry name" value="lgt"/>
    <property type="match status" value="1"/>
</dbReference>
<dbReference type="PANTHER" id="PTHR30589:SF0">
    <property type="entry name" value="PHOSPHATIDYLGLYCEROL--PROLIPOPROTEIN DIACYLGLYCERYL TRANSFERASE"/>
    <property type="match status" value="1"/>
</dbReference>
<dbReference type="PANTHER" id="PTHR30589">
    <property type="entry name" value="PROLIPOPROTEIN DIACYLGLYCERYL TRANSFERASE"/>
    <property type="match status" value="1"/>
</dbReference>
<dbReference type="Pfam" id="PF01790">
    <property type="entry name" value="LGT"/>
    <property type="match status" value="1"/>
</dbReference>
<dbReference type="PROSITE" id="PS01311">
    <property type="entry name" value="LGT"/>
    <property type="match status" value="1"/>
</dbReference>
<accession>Q98PL0</accession>
<keyword id="KW-1003">Cell membrane</keyword>
<keyword id="KW-0472">Membrane</keyword>
<keyword id="KW-1185">Reference proteome</keyword>
<keyword id="KW-0808">Transferase</keyword>
<keyword id="KW-0812">Transmembrane</keyword>
<keyword id="KW-1133">Transmembrane helix</keyword>
<comment type="function">
    <text evidence="1">Catalyzes the transfer of the diacylglyceryl group from phosphatidylglycerol to the sulfhydryl group of the N-terminal cysteine of a prolipoprotein, the first step in the formation of mature lipoproteins.</text>
</comment>
<comment type="catalytic activity">
    <reaction evidence="1">
        <text>L-cysteinyl-[prolipoprotein] + a 1,2-diacyl-sn-glycero-3-phospho-(1'-sn-glycerol) = an S-1,2-diacyl-sn-glyceryl-L-cysteinyl-[prolipoprotein] + sn-glycerol 1-phosphate + H(+)</text>
        <dbReference type="Rhea" id="RHEA:56712"/>
        <dbReference type="Rhea" id="RHEA-COMP:14679"/>
        <dbReference type="Rhea" id="RHEA-COMP:14680"/>
        <dbReference type="ChEBI" id="CHEBI:15378"/>
        <dbReference type="ChEBI" id="CHEBI:29950"/>
        <dbReference type="ChEBI" id="CHEBI:57685"/>
        <dbReference type="ChEBI" id="CHEBI:64716"/>
        <dbReference type="ChEBI" id="CHEBI:140658"/>
        <dbReference type="EC" id="2.5.1.145"/>
    </reaction>
</comment>
<comment type="pathway">
    <text evidence="1">Protein modification; lipoprotein biosynthesis (diacylglyceryl transfer).</text>
</comment>
<comment type="subcellular location">
    <subcellularLocation>
        <location evidence="1">Cell membrane</location>
        <topology evidence="1">Multi-pass membrane protein</topology>
    </subcellularLocation>
</comment>
<comment type="similarity">
    <text evidence="1">Belongs to the Lgt family.</text>
</comment>